<reference key="1">
    <citation type="journal article" date="2003" name="Proc. Natl. Acad. Sci. U.S.A.">
        <title>The complete genome sequence of Mycobacterium bovis.</title>
        <authorList>
            <person name="Garnier T."/>
            <person name="Eiglmeier K."/>
            <person name="Camus J.-C."/>
            <person name="Medina N."/>
            <person name="Mansoor H."/>
            <person name="Pryor M."/>
            <person name="Duthoy S."/>
            <person name="Grondin S."/>
            <person name="Lacroix C."/>
            <person name="Monsempe C."/>
            <person name="Simon S."/>
            <person name="Harris B."/>
            <person name="Atkin R."/>
            <person name="Doggett J."/>
            <person name="Mayes R."/>
            <person name="Keating L."/>
            <person name="Wheeler P.R."/>
            <person name="Parkhill J."/>
            <person name="Barrell B.G."/>
            <person name="Cole S.T."/>
            <person name="Gordon S.V."/>
            <person name="Hewinson R.G."/>
        </authorList>
    </citation>
    <scope>NUCLEOTIDE SEQUENCE [LARGE SCALE GENOMIC DNA]</scope>
    <source>
        <strain>ATCC BAA-935 / AF2122/97</strain>
    </source>
</reference>
<reference key="2">
    <citation type="journal article" date="2017" name="Genome Announc.">
        <title>Updated reference genome sequence and annotation of Mycobacterium bovis AF2122/97.</title>
        <authorList>
            <person name="Malone K.M."/>
            <person name="Farrell D."/>
            <person name="Stuber T.P."/>
            <person name="Schubert O.T."/>
            <person name="Aebersold R."/>
            <person name="Robbe-Austerman S."/>
            <person name="Gordon S.V."/>
        </authorList>
    </citation>
    <scope>NUCLEOTIDE SEQUENCE [LARGE SCALE GENOMIC DNA]</scope>
    <scope>GENOME REANNOTATION</scope>
    <source>
        <strain>ATCC BAA-935 / AF2122/97</strain>
    </source>
</reference>
<keyword id="KW-1185">Reference proteome</keyword>
<accession>P65052</accession>
<accession>A0A1R3Y3B4</accession>
<accession>Q10822</accession>
<accession>X2BLU8</accession>
<name>Y2925_MYCBO</name>
<gene>
    <name type="ordered locus">BQ2027_MB2925C</name>
</gene>
<protein>
    <recommendedName>
        <fullName>Uncharacterized protein Mb2925c</fullName>
    </recommendedName>
</protein>
<proteinExistence type="predicted"/>
<sequence>MSAEDLEKYETEMELSLYREYKDIVGQFSYVVETERRFYLANSVEMVPRNTDGEVYFELRLADAWVWDMYRPARFVKQVRVVTFKDVNIEEVEKPELRLPE</sequence>
<dbReference type="EMBL" id="LT708304">
    <property type="protein sequence ID" value="SIU01546.1"/>
    <property type="molecule type" value="Genomic_DNA"/>
</dbReference>
<dbReference type="RefSeq" id="NP_856570.1">
    <property type="nucleotide sequence ID" value="NC_002945.3"/>
</dbReference>
<dbReference type="RefSeq" id="WP_003414710.1">
    <property type="nucleotide sequence ID" value="NC_002945.4"/>
</dbReference>
<dbReference type="KEGG" id="mbo:BQ2027_MB2925C"/>
<dbReference type="PATRIC" id="fig|233413.5.peg.3211"/>
<dbReference type="Proteomes" id="UP000001419">
    <property type="component" value="Chromosome"/>
</dbReference>
<dbReference type="InterPro" id="IPR019592">
    <property type="entry name" value="DUF2469"/>
</dbReference>
<dbReference type="Pfam" id="PF10611">
    <property type="entry name" value="DUF2469"/>
    <property type="match status" value="1"/>
</dbReference>
<organism>
    <name type="scientific">Mycobacterium bovis (strain ATCC BAA-935 / AF2122/97)</name>
    <dbReference type="NCBI Taxonomy" id="233413"/>
    <lineage>
        <taxon>Bacteria</taxon>
        <taxon>Bacillati</taxon>
        <taxon>Actinomycetota</taxon>
        <taxon>Actinomycetes</taxon>
        <taxon>Mycobacteriales</taxon>
        <taxon>Mycobacteriaceae</taxon>
        <taxon>Mycobacterium</taxon>
        <taxon>Mycobacterium tuberculosis complex</taxon>
    </lineage>
</organism>
<feature type="chain" id="PRO_0000104097" description="Uncharacterized protein Mb2925c">
    <location>
        <begin position="1"/>
        <end position="101"/>
    </location>
</feature>